<organism>
    <name type="scientific">Pseudomonas fluorescens (strain SBW25)</name>
    <dbReference type="NCBI Taxonomy" id="216595"/>
    <lineage>
        <taxon>Bacteria</taxon>
        <taxon>Pseudomonadati</taxon>
        <taxon>Pseudomonadota</taxon>
        <taxon>Gammaproteobacteria</taxon>
        <taxon>Pseudomonadales</taxon>
        <taxon>Pseudomonadaceae</taxon>
        <taxon>Pseudomonas</taxon>
    </lineage>
</organism>
<sequence length="301" mass="32509">MKIAVLSRNPRLYSTRRLVEAGVERGHEMVVIDTLRAYMNIASHKPQIHYRGKPLEGFDAVIPRIGASVTFYGCAVLRQFEMMGVFPLNESVAIARSRDKLRSLQLLSRRGIGLPVTGFAHSPDDIPDLIDMVNGAPLVIKVLEGTQGIGVVLCETATAAESVIEAFMGLKQNIMVQEYIKEAGGADIRCFVVGDKVIAAMKRQAKPGEFRSNLHRGGSASLIKITPEERMTALRAAKVMGLSVAGVDILRSNHGPLVMEVNSSPGLEGIETTTGKNVAGIIIEHLEKNGGPNMTRTKGKG</sequence>
<comment type="cofactor">
    <cofactor evidence="1">
        <name>Mg(2+)</name>
        <dbReference type="ChEBI" id="CHEBI:18420"/>
    </cofactor>
    <cofactor evidence="1">
        <name>Mn(2+)</name>
        <dbReference type="ChEBI" id="CHEBI:29035"/>
    </cofactor>
    <text evidence="1">Binds 2 magnesium or manganese ions per subunit.</text>
</comment>
<comment type="similarity">
    <text evidence="1">Belongs to the RimK family.</text>
</comment>
<protein>
    <recommendedName>
        <fullName evidence="1">Probable alpha-L-glutamate ligase</fullName>
        <ecNumber evidence="1">6.3.2.-</ecNumber>
    </recommendedName>
</protein>
<name>RIMK_PSEFS</name>
<feature type="chain" id="PRO_1000215477" description="Probable alpha-L-glutamate ligase">
    <location>
        <begin position="1"/>
        <end position="301"/>
    </location>
</feature>
<feature type="domain" description="ATP-grasp" evidence="1">
    <location>
        <begin position="104"/>
        <end position="287"/>
    </location>
</feature>
<feature type="binding site" evidence="1">
    <location>
        <position position="141"/>
    </location>
    <ligand>
        <name>ATP</name>
        <dbReference type="ChEBI" id="CHEBI:30616"/>
    </ligand>
</feature>
<feature type="binding site" evidence="1">
    <location>
        <begin position="178"/>
        <end position="179"/>
    </location>
    <ligand>
        <name>ATP</name>
        <dbReference type="ChEBI" id="CHEBI:30616"/>
    </ligand>
</feature>
<feature type="binding site" evidence="1">
    <location>
        <position position="187"/>
    </location>
    <ligand>
        <name>ATP</name>
        <dbReference type="ChEBI" id="CHEBI:30616"/>
    </ligand>
</feature>
<feature type="binding site" evidence="1">
    <location>
        <begin position="211"/>
        <end position="213"/>
    </location>
    <ligand>
        <name>ATP</name>
        <dbReference type="ChEBI" id="CHEBI:30616"/>
    </ligand>
</feature>
<feature type="binding site" evidence="1">
    <location>
        <position position="248"/>
    </location>
    <ligand>
        <name>Mg(2+)</name>
        <dbReference type="ChEBI" id="CHEBI:18420"/>
        <label>1</label>
    </ligand>
</feature>
<feature type="binding site" evidence="1">
    <location>
        <position position="248"/>
    </location>
    <ligand>
        <name>Mn(2+)</name>
        <dbReference type="ChEBI" id="CHEBI:29035"/>
        <label>1</label>
    </ligand>
</feature>
<feature type="binding site" evidence="1">
    <location>
        <position position="260"/>
    </location>
    <ligand>
        <name>Mg(2+)</name>
        <dbReference type="ChEBI" id="CHEBI:18420"/>
        <label>1</label>
    </ligand>
</feature>
<feature type="binding site" evidence="1">
    <location>
        <position position="260"/>
    </location>
    <ligand>
        <name>Mg(2+)</name>
        <dbReference type="ChEBI" id="CHEBI:18420"/>
        <label>2</label>
    </ligand>
</feature>
<feature type="binding site" evidence="1">
    <location>
        <position position="260"/>
    </location>
    <ligand>
        <name>Mn(2+)</name>
        <dbReference type="ChEBI" id="CHEBI:29035"/>
        <label>1</label>
    </ligand>
</feature>
<feature type="binding site" evidence="1">
    <location>
        <position position="260"/>
    </location>
    <ligand>
        <name>Mn(2+)</name>
        <dbReference type="ChEBI" id="CHEBI:29035"/>
        <label>2</label>
    </ligand>
</feature>
<feature type="binding site" evidence="1">
    <location>
        <position position="262"/>
    </location>
    <ligand>
        <name>Mg(2+)</name>
        <dbReference type="ChEBI" id="CHEBI:18420"/>
        <label>2</label>
    </ligand>
</feature>
<feature type="binding site" evidence="1">
    <location>
        <position position="262"/>
    </location>
    <ligand>
        <name>Mn(2+)</name>
        <dbReference type="ChEBI" id="CHEBI:29035"/>
        <label>2</label>
    </ligand>
</feature>
<accession>C3KE61</accession>
<evidence type="ECO:0000255" key="1">
    <source>
        <dbReference type="HAMAP-Rule" id="MF_01552"/>
    </source>
</evidence>
<dbReference type="EC" id="6.3.2.-" evidence="1"/>
<dbReference type="EMBL" id="AM181176">
    <property type="protein sequence ID" value="CAY46540.1"/>
    <property type="molecule type" value="Genomic_DNA"/>
</dbReference>
<dbReference type="RefSeq" id="WP_012721686.1">
    <property type="nucleotide sequence ID" value="NC_012660.1"/>
</dbReference>
<dbReference type="SMR" id="C3KE61"/>
<dbReference type="STRING" id="294.SRM1_00313"/>
<dbReference type="PATRIC" id="fig|216595.4.peg.495"/>
<dbReference type="eggNOG" id="COG0189">
    <property type="taxonomic scope" value="Bacteria"/>
</dbReference>
<dbReference type="HOGENOM" id="CLU_054353_0_1_6"/>
<dbReference type="OrthoDB" id="3865600at2"/>
<dbReference type="GO" id="GO:0005737">
    <property type="term" value="C:cytoplasm"/>
    <property type="evidence" value="ECO:0007669"/>
    <property type="project" value="TreeGrafter"/>
</dbReference>
<dbReference type="GO" id="GO:0005524">
    <property type="term" value="F:ATP binding"/>
    <property type="evidence" value="ECO:0007669"/>
    <property type="project" value="UniProtKB-UniRule"/>
</dbReference>
<dbReference type="GO" id="GO:0046872">
    <property type="term" value="F:metal ion binding"/>
    <property type="evidence" value="ECO:0007669"/>
    <property type="project" value="UniProtKB-KW"/>
</dbReference>
<dbReference type="GO" id="GO:0018169">
    <property type="term" value="F:ribosomal S6-glutamic acid ligase activity"/>
    <property type="evidence" value="ECO:0007669"/>
    <property type="project" value="TreeGrafter"/>
</dbReference>
<dbReference type="GO" id="GO:0036211">
    <property type="term" value="P:protein modification process"/>
    <property type="evidence" value="ECO:0007669"/>
    <property type="project" value="InterPro"/>
</dbReference>
<dbReference type="GO" id="GO:0009432">
    <property type="term" value="P:SOS response"/>
    <property type="evidence" value="ECO:0007669"/>
    <property type="project" value="TreeGrafter"/>
</dbReference>
<dbReference type="GO" id="GO:0006412">
    <property type="term" value="P:translation"/>
    <property type="evidence" value="ECO:0007669"/>
    <property type="project" value="UniProtKB-KW"/>
</dbReference>
<dbReference type="FunFam" id="3.40.50.20:FF:000004">
    <property type="entry name" value="Probable alpha-L-glutamate ligase"/>
    <property type="match status" value="1"/>
</dbReference>
<dbReference type="FunFam" id="3.30.1490.20:FF:000005">
    <property type="entry name" value="Probable alpha-L-glutamate ligase 1"/>
    <property type="match status" value="1"/>
</dbReference>
<dbReference type="FunFam" id="3.30.470.20:FF:000016">
    <property type="entry name" value="Ribosomal protein S6--L-glutamate ligase"/>
    <property type="match status" value="1"/>
</dbReference>
<dbReference type="Gene3D" id="3.40.50.20">
    <property type="match status" value="1"/>
</dbReference>
<dbReference type="Gene3D" id="3.30.1490.20">
    <property type="entry name" value="ATP-grasp fold, A domain"/>
    <property type="match status" value="1"/>
</dbReference>
<dbReference type="Gene3D" id="3.30.470.20">
    <property type="entry name" value="ATP-grasp fold, B domain"/>
    <property type="match status" value="1"/>
</dbReference>
<dbReference type="HAMAP" id="MF_01552">
    <property type="entry name" value="RimK"/>
    <property type="match status" value="1"/>
</dbReference>
<dbReference type="InterPro" id="IPR011761">
    <property type="entry name" value="ATP-grasp"/>
</dbReference>
<dbReference type="InterPro" id="IPR013651">
    <property type="entry name" value="ATP-grasp_RimK-type"/>
</dbReference>
<dbReference type="InterPro" id="IPR013815">
    <property type="entry name" value="ATP_grasp_subdomain_1"/>
</dbReference>
<dbReference type="InterPro" id="IPR023533">
    <property type="entry name" value="RimK"/>
</dbReference>
<dbReference type="InterPro" id="IPR041107">
    <property type="entry name" value="Rimk_N"/>
</dbReference>
<dbReference type="InterPro" id="IPR004666">
    <property type="entry name" value="Rp_bS6_RimK/Lys_biosynth_LsyX"/>
</dbReference>
<dbReference type="NCBIfam" id="NF007764">
    <property type="entry name" value="PRK10446.1"/>
    <property type="match status" value="1"/>
</dbReference>
<dbReference type="NCBIfam" id="TIGR00768">
    <property type="entry name" value="rimK_fam"/>
    <property type="match status" value="1"/>
</dbReference>
<dbReference type="PANTHER" id="PTHR21621:SF7">
    <property type="entry name" value="RIBOSOMAL PROTEIN BS6--L-GLUTAMATE LIGASE"/>
    <property type="match status" value="1"/>
</dbReference>
<dbReference type="PANTHER" id="PTHR21621">
    <property type="entry name" value="RIBOSOMAL PROTEIN S6 MODIFICATION PROTEIN"/>
    <property type="match status" value="1"/>
</dbReference>
<dbReference type="Pfam" id="PF08443">
    <property type="entry name" value="RimK"/>
    <property type="match status" value="1"/>
</dbReference>
<dbReference type="Pfam" id="PF18030">
    <property type="entry name" value="Rimk_N"/>
    <property type="match status" value="1"/>
</dbReference>
<dbReference type="SUPFAM" id="SSF56059">
    <property type="entry name" value="Glutathione synthetase ATP-binding domain-like"/>
    <property type="match status" value="1"/>
</dbReference>
<dbReference type="PROSITE" id="PS50975">
    <property type="entry name" value="ATP_GRASP"/>
    <property type="match status" value="1"/>
</dbReference>
<reference key="1">
    <citation type="journal article" date="2009" name="Genome Biol.">
        <title>Genomic and genetic analyses of diversity and plant interactions of Pseudomonas fluorescens.</title>
        <authorList>
            <person name="Silby M.W."/>
            <person name="Cerdeno-Tarraga A.M."/>
            <person name="Vernikos G.S."/>
            <person name="Giddens S.R."/>
            <person name="Jackson R.W."/>
            <person name="Preston G.M."/>
            <person name="Zhang X.-X."/>
            <person name="Moon C.D."/>
            <person name="Gehrig S.M."/>
            <person name="Godfrey S.A.C."/>
            <person name="Knight C.G."/>
            <person name="Malone J.G."/>
            <person name="Robinson Z."/>
            <person name="Spiers A.J."/>
            <person name="Harris S."/>
            <person name="Challis G.L."/>
            <person name="Yaxley A.M."/>
            <person name="Harris D."/>
            <person name="Seeger K."/>
            <person name="Murphy L."/>
            <person name="Rutter S."/>
            <person name="Squares R."/>
            <person name="Quail M.A."/>
            <person name="Saunders E."/>
            <person name="Mavromatis K."/>
            <person name="Brettin T.S."/>
            <person name="Bentley S.D."/>
            <person name="Hothersall J."/>
            <person name="Stephens E."/>
            <person name="Thomas C.M."/>
            <person name="Parkhill J."/>
            <person name="Levy S.B."/>
            <person name="Rainey P.B."/>
            <person name="Thomson N.R."/>
        </authorList>
    </citation>
    <scope>NUCLEOTIDE SEQUENCE [LARGE SCALE GENOMIC DNA]</scope>
    <source>
        <strain>SBW25</strain>
    </source>
</reference>
<gene>
    <name evidence="1" type="primary">rimK</name>
    <name type="ordered locus">PFLU_0261</name>
</gene>
<proteinExistence type="inferred from homology"/>
<keyword id="KW-0067">ATP-binding</keyword>
<keyword id="KW-0436">Ligase</keyword>
<keyword id="KW-0460">Magnesium</keyword>
<keyword id="KW-0464">Manganese</keyword>
<keyword id="KW-0479">Metal-binding</keyword>
<keyword id="KW-0547">Nucleotide-binding</keyword>
<keyword id="KW-0648">Protein biosynthesis</keyword>